<sequence length="196" mass="21362">METATEVATVVSTPAVTVAAVATRKRDKPYKGIRMRKWGKWVAEIREPNKRSRIWLGSYSTPEAAARAYDTAVFYLRGPSARLNFPELLAGVTVTGGGGGGVNGGGDMSAAYIRRKAAEVGAQVDALEAAGAGGNRHHHHHQHQRGNHDYVDNHSDYRINDDLMECSSKEGFKRCNGSLERVDLNKLPDPETSDDD</sequence>
<proteinExistence type="evidence at transcript level"/>
<keyword id="KW-0010">Activator</keyword>
<keyword id="KW-0238">DNA-binding</keyword>
<keyword id="KW-0936">Ethylene signaling pathway</keyword>
<keyword id="KW-0539">Nucleus</keyword>
<keyword id="KW-1185">Reference proteome</keyword>
<keyword id="KW-0804">Transcription</keyword>
<keyword id="KW-0805">Transcription regulation</keyword>
<gene>
    <name type="primary">RAP2-10</name>
    <name type="synonym">ERF009</name>
    <name type="ordered locus">At4g36900</name>
    <name type="ORF">AP22.2</name>
    <name type="ORF">C7A10.460</name>
</gene>
<organism>
    <name type="scientific">Arabidopsis thaliana</name>
    <name type="common">Mouse-ear cress</name>
    <dbReference type="NCBI Taxonomy" id="3702"/>
    <lineage>
        <taxon>Eukaryota</taxon>
        <taxon>Viridiplantae</taxon>
        <taxon>Streptophyta</taxon>
        <taxon>Embryophyta</taxon>
        <taxon>Tracheophyta</taxon>
        <taxon>Spermatophyta</taxon>
        <taxon>Magnoliopsida</taxon>
        <taxon>eudicotyledons</taxon>
        <taxon>Gunneridae</taxon>
        <taxon>Pentapetalae</taxon>
        <taxon>rosids</taxon>
        <taxon>malvids</taxon>
        <taxon>Brassicales</taxon>
        <taxon>Brassicaceae</taxon>
        <taxon>Camelineae</taxon>
        <taxon>Arabidopsis</taxon>
    </lineage>
</organism>
<dbReference type="EMBL" id="AF003103">
    <property type="protein sequence ID" value="AAC49776.1"/>
    <property type="status" value="ALT_INIT"/>
    <property type="molecule type" value="mRNA"/>
</dbReference>
<dbReference type="EMBL" id="AJ002598">
    <property type="protein sequence ID" value="CAA05630.1"/>
    <property type="status" value="ALT_INIT"/>
    <property type="molecule type" value="mRNA"/>
</dbReference>
<dbReference type="EMBL" id="Z99707">
    <property type="protein sequence ID" value="CAB16766.1"/>
    <property type="molecule type" value="Genomic_DNA"/>
</dbReference>
<dbReference type="EMBL" id="AL161590">
    <property type="protein sequence ID" value="CAB80356.1"/>
    <property type="molecule type" value="Genomic_DNA"/>
</dbReference>
<dbReference type="EMBL" id="CP002687">
    <property type="protein sequence ID" value="AEE86715.1"/>
    <property type="molecule type" value="Genomic_DNA"/>
</dbReference>
<dbReference type="EMBL" id="AY057683">
    <property type="protein sequence ID" value="AAL15314.1"/>
    <property type="molecule type" value="mRNA"/>
</dbReference>
<dbReference type="EMBL" id="BT020317">
    <property type="protein sequence ID" value="AAV85672.1"/>
    <property type="molecule type" value="mRNA"/>
</dbReference>
<dbReference type="EMBL" id="BT020302">
    <property type="protein sequence ID" value="AAV84523.1"/>
    <property type="molecule type" value="mRNA"/>
</dbReference>
<dbReference type="EMBL" id="BT025757">
    <property type="protein sequence ID" value="ABF83647.1"/>
    <property type="molecule type" value="mRNA"/>
</dbReference>
<dbReference type="PIR" id="G85435">
    <property type="entry name" value="G85435"/>
</dbReference>
<dbReference type="PIR" id="T52619">
    <property type="entry name" value="T52619"/>
</dbReference>
<dbReference type="RefSeq" id="NP_195408.1">
    <property type="nucleotide sequence ID" value="NM_119854.3"/>
</dbReference>
<dbReference type="SMR" id="Q9SW63"/>
<dbReference type="BioGRID" id="15124">
    <property type="interactions" value="1"/>
</dbReference>
<dbReference type="FunCoup" id="Q9SW63">
    <property type="interactions" value="82"/>
</dbReference>
<dbReference type="IntAct" id="Q9SW63">
    <property type="interactions" value="1"/>
</dbReference>
<dbReference type="STRING" id="3702.Q9SW63"/>
<dbReference type="GlyGen" id="Q9SW63">
    <property type="glycosylation" value="1 site"/>
</dbReference>
<dbReference type="iPTMnet" id="Q9SW63"/>
<dbReference type="PaxDb" id="3702-AT4G36900.1"/>
<dbReference type="ProteomicsDB" id="226144"/>
<dbReference type="EnsemblPlants" id="AT4G36900.1">
    <property type="protein sequence ID" value="AT4G36900.1"/>
    <property type="gene ID" value="AT4G36900"/>
</dbReference>
<dbReference type="GeneID" id="829843"/>
<dbReference type="Gramene" id="AT4G36900.1">
    <property type="protein sequence ID" value="AT4G36900.1"/>
    <property type="gene ID" value="AT4G36900"/>
</dbReference>
<dbReference type="KEGG" id="ath:AT4G36900"/>
<dbReference type="Araport" id="AT4G36900"/>
<dbReference type="TAIR" id="AT4G36900">
    <property type="gene designation" value="RAP2.10"/>
</dbReference>
<dbReference type="eggNOG" id="ENOG502S0BY">
    <property type="taxonomic scope" value="Eukaryota"/>
</dbReference>
<dbReference type="HOGENOM" id="CLU_063331_7_2_1"/>
<dbReference type="InParanoid" id="Q9SW63"/>
<dbReference type="OMA" id="EGFKRCN"/>
<dbReference type="OrthoDB" id="1937547at2759"/>
<dbReference type="PhylomeDB" id="Q9SW63"/>
<dbReference type="PRO" id="PR:Q9SW63"/>
<dbReference type="Proteomes" id="UP000006548">
    <property type="component" value="Chromosome 4"/>
</dbReference>
<dbReference type="ExpressionAtlas" id="Q9SW63">
    <property type="expression patterns" value="baseline and differential"/>
</dbReference>
<dbReference type="GO" id="GO:0005634">
    <property type="term" value="C:nucleus"/>
    <property type="evidence" value="ECO:0007669"/>
    <property type="project" value="UniProtKB-SubCell"/>
</dbReference>
<dbReference type="GO" id="GO:0003700">
    <property type="term" value="F:DNA-binding transcription factor activity"/>
    <property type="evidence" value="ECO:0000250"/>
    <property type="project" value="TAIR"/>
</dbReference>
<dbReference type="GO" id="GO:0000976">
    <property type="term" value="F:transcription cis-regulatory region binding"/>
    <property type="evidence" value="ECO:0000353"/>
    <property type="project" value="TAIR"/>
</dbReference>
<dbReference type="GO" id="GO:0009873">
    <property type="term" value="P:ethylene-activated signaling pathway"/>
    <property type="evidence" value="ECO:0007669"/>
    <property type="project" value="UniProtKB-KW"/>
</dbReference>
<dbReference type="GO" id="GO:0045892">
    <property type="term" value="P:negative regulation of DNA-templated transcription"/>
    <property type="evidence" value="ECO:0000314"/>
    <property type="project" value="TAIR"/>
</dbReference>
<dbReference type="GO" id="GO:1900057">
    <property type="term" value="P:positive regulation of leaf senescence"/>
    <property type="evidence" value="ECO:0000315"/>
    <property type="project" value="TAIR"/>
</dbReference>
<dbReference type="CDD" id="cd00018">
    <property type="entry name" value="AP2"/>
    <property type="match status" value="1"/>
</dbReference>
<dbReference type="FunFam" id="3.30.730.10:FF:000001">
    <property type="entry name" value="Ethylene-responsive transcription factor 2"/>
    <property type="match status" value="1"/>
</dbReference>
<dbReference type="Gene3D" id="3.30.730.10">
    <property type="entry name" value="AP2/ERF domain"/>
    <property type="match status" value="1"/>
</dbReference>
<dbReference type="InterPro" id="IPR001471">
    <property type="entry name" value="AP2/ERF_dom"/>
</dbReference>
<dbReference type="InterPro" id="IPR036955">
    <property type="entry name" value="AP2/ERF_dom_sf"/>
</dbReference>
<dbReference type="InterPro" id="IPR016177">
    <property type="entry name" value="DNA-bd_dom_sf"/>
</dbReference>
<dbReference type="PANTHER" id="PTHR31729">
    <property type="entry name" value="ETHYLENE-RESPONSIVE TRANSCRIPTION FACTOR RAP2-1-RELATED"/>
    <property type="match status" value="1"/>
</dbReference>
<dbReference type="PANTHER" id="PTHR31729:SF0">
    <property type="entry name" value="ETHYLENE-RESPONSIVE TRANSCRIPTION FACTOR RAP2-10"/>
    <property type="match status" value="1"/>
</dbReference>
<dbReference type="Pfam" id="PF00847">
    <property type="entry name" value="AP2"/>
    <property type="match status" value="1"/>
</dbReference>
<dbReference type="PRINTS" id="PR00367">
    <property type="entry name" value="ETHRSPELEMNT"/>
</dbReference>
<dbReference type="SMART" id="SM00380">
    <property type="entry name" value="AP2"/>
    <property type="match status" value="1"/>
</dbReference>
<dbReference type="SUPFAM" id="SSF54171">
    <property type="entry name" value="DNA-binding domain"/>
    <property type="match status" value="1"/>
</dbReference>
<dbReference type="PROSITE" id="PS51032">
    <property type="entry name" value="AP2_ERF"/>
    <property type="match status" value="1"/>
</dbReference>
<comment type="function">
    <text evidence="1">Probably acts as a transcriptional activator. Binds to the GCC-box pathogenesis-related promoter element. May be involved in the regulation of gene expression by stress factors and by components of stress signal transduction pathways (By similarity).</text>
</comment>
<comment type="subcellular location">
    <subcellularLocation>
        <location evidence="4">Nucleus</location>
    </subcellularLocation>
</comment>
<comment type="similarity">
    <text evidence="4">Belongs to the AP2/ERF transcription factor family. ERF subfamily.</text>
</comment>
<comment type="sequence caution" evidence="4">
    <conflict type="erroneous initiation">
        <sequence resource="EMBL-CDS" id="AAC49776"/>
    </conflict>
</comment>
<comment type="sequence caution" evidence="4">
    <conflict type="erroneous initiation">
        <sequence resource="EMBL-CDS" id="CAA05630"/>
    </conflict>
</comment>
<reference key="1">
    <citation type="journal article" date="1997" name="Proc. Natl. Acad. Sci. U.S.A.">
        <title>The AP2 domain of APETALA2 defines a large new family of DNA binding proteins in Arabidopsis.</title>
        <authorList>
            <person name="Okamuro J.K."/>
            <person name="Caster B."/>
            <person name="Villarroel R."/>
            <person name="Van Montagu M."/>
            <person name="Jofuku K.D."/>
        </authorList>
    </citation>
    <scope>NUCLEOTIDE SEQUENCE [MRNA]</scope>
</reference>
<reference key="2">
    <citation type="journal article" date="1999" name="FEBS Lett.">
        <title>Evidence for an ancient chromosomal duplication in Arabidopsis thaliana by sequencing and analyzing a 400-kb contig at the APETALA2 locus on chromosome 4.</title>
        <authorList>
            <person name="Terryn N."/>
            <person name="Heijnen L."/>
            <person name="De Keyser A."/>
            <person name="Van Asseldonck M."/>
            <person name="De Clercq R."/>
            <person name="Verbakel H."/>
            <person name="Gielen J."/>
            <person name="Zabeau M."/>
            <person name="Villarroel R."/>
            <person name="Jesse T."/>
            <person name="Neyt P."/>
            <person name="Hogers R."/>
            <person name="Van Den Daele H."/>
            <person name="Ardiles W."/>
            <person name="Schueller C."/>
            <person name="Mayer K.F.X."/>
            <person name="Dehais P."/>
            <person name="Rombauts S."/>
            <person name="Van Montagu M."/>
            <person name="Rouze P."/>
            <person name="Vos P."/>
        </authorList>
    </citation>
    <scope>NUCLEOTIDE SEQUENCE [MRNA]</scope>
    <source>
        <strain>cv. Columbia</strain>
    </source>
</reference>
<reference key="3">
    <citation type="journal article" date="1998" name="Nature">
        <title>Analysis of 1.9 Mb of contiguous sequence from chromosome 4 of Arabidopsis thaliana.</title>
        <authorList>
            <person name="Bevan M."/>
            <person name="Bancroft I."/>
            <person name="Bent E."/>
            <person name="Love K."/>
            <person name="Goodman H.M."/>
            <person name="Dean C."/>
            <person name="Bergkamp R."/>
            <person name="Dirkse W."/>
            <person name="van Staveren M."/>
            <person name="Stiekema W."/>
            <person name="Drost L."/>
            <person name="Ridley P."/>
            <person name="Hudson S.-A."/>
            <person name="Patel K."/>
            <person name="Murphy G."/>
            <person name="Piffanelli P."/>
            <person name="Wedler H."/>
            <person name="Wedler E."/>
            <person name="Wambutt R."/>
            <person name="Weitzenegger T."/>
            <person name="Pohl T."/>
            <person name="Terryn N."/>
            <person name="Gielen J."/>
            <person name="Villarroel R."/>
            <person name="De Clercq R."/>
            <person name="van Montagu M."/>
            <person name="Lecharny A."/>
            <person name="Aubourg S."/>
            <person name="Gy I."/>
            <person name="Kreis M."/>
            <person name="Lao N."/>
            <person name="Kavanagh T."/>
            <person name="Hempel S."/>
            <person name="Kotter P."/>
            <person name="Entian K.-D."/>
            <person name="Rieger M."/>
            <person name="Schaefer M."/>
            <person name="Funk B."/>
            <person name="Mueller-Auer S."/>
            <person name="Silvey M."/>
            <person name="James R."/>
            <person name="Monfort A."/>
            <person name="Pons A."/>
            <person name="Puigdomenech P."/>
            <person name="Douka A."/>
            <person name="Voukelatou E."/>
            <person name="Milioni D."/>
            <person name="Hatzopoulos P."/>
            <person name="Piravandi E."/>
            <person name="Obermaier B."/>
            <person name="Hilbert H."/>
            <person name="Duesterhoeft A."/>
            <person name="Moores T."/>
            <person name="Jones J.D.G."/>
            <person name="Eneva T."/>
            <person name="Palme K."/>
            <person name="Benes V."/>
            <person name="Rechmann S."/>
            <person name="Ansorge W."/>
            <person name="Cooke R."/>
            <person name="Berger C."/>
            <person name="Delseny M."/>
            <person name="Voet M."/>
            <person name="Volckaert G."/>
            <person name="Mewes H.-W."/>
            <person name="Klosterman S."/>
            <person name="Schueller C."/>
            <person name="Chalwatzis N."/>
        </authorList>
    </citation>
    <scope>NUCLEOTIDE SEQUENCE [LARGE SCALE GENOMIC DNA]</scope>
    <source>
        <strain>cv. Columbia</strain>
    </source>
</reference>
<reference key="4">
    <citation type="journal article" date="1999" name="Nature">
        <title>Sequence and analysis of chromosome 4 of the plant Arabidopsis thaliana.</title>
        <authorList>
            <person name="Mayer K.F.X."/>
            <person name="Schueller C."/>
            <person name="Wambutt R."/>
            <person name="Murphy G."/>
            <person name="Volckaert G."/>
            <person name="Pohl T."/>
            <person name="Duesterhoeft A."/>
            <person name="Stiekema W."/>
            <person name="Entian K.-D."/>
            <person name="Terryn N."/>
            <person name="Harris B."/>
            <person name="Ansorge W."/>
            <person name="Brandt P."/>
            <person name="Grivell L.A."/>
            <person name="Rieger M."/>
            <person name="Weichselgartner M."/>
            <person name="de Simone V."/>
            <person name="Obermaier B."/>
            <person name="Mache R."/>
            <person name="Mueller M."/>
            <person name="Kreis M."/>
            <person name="Delseny M."/>
            <person name="Puigdomenech P."/>
            <person name="Watson M."/>
            <person name="Schmidtheini T."/>
            <person name="Reichert B."/>
            <person name="Portetelle D."/>
            <person name="Perez-Alonso M."/>
            <person name="Boutry M."/>
            <person name="Bancroft I."/>
            <person name="Vos P."/>
            <person name="Hoheisel J."/>
            <person name="Zimmermann W."/>
            <person name="Wedler H."/>
            <person name="Ridley P."/>
            <person name="Langham S.-A."/>
            <person name="McCullagh B."/>
            <person name="Bilham L."/>
            <person name="Robben J."/>
            <person name="van der Schueren J."/>
            <person name="Grymonprez B."/>
            <person name="Chuang Y.-J."/>
            <person name="Vandenbussche F."/>
            <person name="Braeken M."/>
            <person name="Weltjens I."/>
            <person name="Voet M."/>
            <person name="Bastiaens I."/>
            <person name="Aert R."/>
            <person name="Defoor E."/>
            <person name="Weitzenegger T."/>
            <person name="Bothe G."/>
            <person name="Ramsperger U."/>
            <person name="Hilbert H."/>
            <person name="Braun M."/>
            <person name="Holzer E."/>
            <person name="Brandt A."/>
            <person name="Peters S."/>
            <person name="van Staveren M."/>
            <person name="Dirkse W."/>
            <person name="Mooijman P."/>
            <person name="Klein Lankhorst R."/>
            <person name="Rose M."/>
            <person name="Hauf J."/>
            <person name="Koetter P."/>
            <person name="Berneiser S."/>
            <person name="Hempel S."/>
            <person name="Feldpausch M."/>
            <person name="Lamberth S."/>
            <person name="Van den Daele H."/>
            <person name="De Keyser A."/>
            <person name="Buysshaert C."/>
            <person name="Gielen J."/>
            <person name="Villarroel R."/>
            <person name="De Clercq R."/>
            <person name="van Montagu M."/>
            <person name="Rogers J."/>
            <person name="Cronin A."/>
            <person name="Quail M.A."/>
            <person name="Bray-Allen S."/>
            <person name="Clark L."/>
            <person name="Doggett J."/>
            <person name="Hall S."/>
            <person name="Kay M."/>
            <person name="Lennard N."/>
            <person name="McLay K."/>
            <person name="Mayes R."/>
            <person name="Pettett A."/>
            <person name="Rajandream M.A."/>
            <person name="Lyne M."/>
            <person name="Benes V."/>
            <person name="Rechmann S."/>
            <person name="Borkova D."/>
            <person name="Bloecker H."/>
            <person name="Scharfe M."/>
            <person name="Grimm M."/>
            <person name="Loehnert T.-H."/>
            <person name="Dose S."/>
            <person name="de Haan M."/>
            <person name="Maarse A.C."/>
            <person name="Schaefer M."/>
            <person name="Mueller-Auer S."/>
            <person name="Gabel C."/>
            <person name="Fuchs M."/>
            <person name="Fartmann B."/>
            <person name="Granderath K."/>
            <person name="Dauner D."/>
            <person name="Herzl A."/>
            <person name="Neumann S."/>
            <person name="Argiriou A."/>
            <person name="Vitale D."/>
            <person name="Liguori R."/>
            <person name="Piravandi E."/>
            <person name="Massenet O."/>
            <person name="Quigley F."/>
            <person name="Clabauld G."/>
            <person name="Muendlein A."/>
            <person name="Felber R."/>
            <person name="Schnabl S."/>
            <person name="Hiller R."/>
            <person name="Schmidt W."/>
            <person name="Lecharny A."/>
            <person name="Aubourg S."/>
            <person name="Chefdor F."/>
            <person name="Cooke R."/>
            <person name="Berger C."/>
            <person name="Monfort A."/>
            <person name="Casacuberta E."/>
            <person name="Gibbons T."/>
            <person name="Weber N."/>
            <person name="Vandenbol M."/>
            <person name="Bargues M."/>
            <person name="Terol J."/>
            <person name="Torres A."/>
            <person name="Perez-Perez A."/>
            <person name="Purnelle B."/>
            <person name="Bent E."/>
            <person name="Johnson S."/>
            <person name="Tacon D."/>
            <person name="Jesse T."/>
            <person name="Heijnen L."/>
            <person name="Schwarz S."/>
            <person name="Scholler P."/>
            <person name="Heber S."/>
            <person name="Francs P."/>
            <person name="Bielke C."/>
            <person name="Frishman D."/>
            <person name="Haase D."/>
            <person name="Lemcke K."/>
            <person name="Mewes H.-W."/>
            <person name="Stocker S."/>
            <person name="Zaccaria P."/>
            <person name="Bevan M."/>
            <person name="Wilson R.K."/>
            <person name="de la Bastide M."/>
            <person name="Habermann K."/>
            <person name="Parnell L."/>
            <person name="Dedhia N."/>
            <person name="Gnoj L."/>
            <person name="Schutz K."/>
            <person name="Huang E."/>
            <person name="Spiegel L."/>
            <person name="Sekhon M."/>
            <person name="Murray J."/>
            <person name="Sheet P."/>
            <person name="Cordes M."/>
            <person name="Abu-Threideh J."/>
            <person name="Stoneking T."/>
            <person name="Kalicki J."/>
            <person name="Graves T."/>
            <person name="Harmon G."/>
            <person name="Edwards J."/>
            <person name="Latreille P."/>
            <person name="Courtney L."/>
            <person name="Cloud J."/>
            <person name="Abbott A."/>
            <person name="Scott K."/>
            <person name="Johnson D."/>
            <person name="Minx P."/>
            <person name="Bentley D."/>
            <person name="Fulton B."/>
            <person name="Miller N."/>
            <person name="Greco T."/>
            <person name="Kemp K."/>
            <person name="Kramer J."/>
            <person name="Fulton L."/>
            <person name="Mardis E."/>
            <person name="Dante M."/>
            <person name="Pepin K."/>
            <person name="Hillier L.W."/>
            <person name="Nelson J."/>
            <person name="Spieth J."/>
            <person name="Ryan E."/>
            <person name="Andrews S."/>
            <person name="Geisel C."/>
            <person name="Layman D."/>
            <person name="Du H."/>
            <person name="Ali J."/>
            <person name="Berghoff A."/>
            <person name="Jones K."/>
            <person name="Drone K."/>
            <person name="Cotton M."/>
            <person name="Joshu C."/>
            <person name="Antonoiu B."/>
            <person name="Zidanic M."/>
            <person name="Strong C."/>
            <person name="Sun H."/>
            <person name="Lamar B."/>
            <person name="Yordan C."/>
            <person name="Ma P."/>
            <person name="Zhong J."/>
            <person name="Preston R."/>
            <person name="Vil D."/>
            <person name="Shekher M."/>
            <person name="Matero A."/>
            <person name="Shah R."/>
            <person name="Swaby I.K."/>
            <person name="O'Shaughnessy A."/>
            <person name="Rodriguez M."/>
            <person name="Hoffman J."/>
            <person name="Till S."/>
            <person name="Granat S."/>
            <person name="Shohdy N."/>
            <person name="Hasegawa A."/>
            <person name="Hameed A."/>
            <person name="Lodhi M."/>
            <person name="Johnson A."/>
            <person name="Chen E."/>
            <person name="Marra M.A."/>
            <person name="Martienssen R."/>
            <person name="McCombie W.R."/>
        </authorList>
    </citation>
    <scope>NUCLEOTIDE SEQUENCE [LARGE SCALE GENOMIC DNA]</scope>
    <source>
        <strain>cv. Columbia</strain>
    </source>
</reference>
<reference key="5">
    <citation type="journal article" date="2017" name="Plant J.">
        <title>Araport11: a complete reannotation of the Arabidopsis thaliana reference genome.</title>
        <authorList>
            <person name="Cheng C.Y."/>
            <person name="Krishnakumar V."/>
            <person name="Chan A.P."/>
            <person name="Thibaud-Nissen F."/>
            <person name="Schobel S."/>
            <person name="Town C.D."/>
        </authorList>
    </citation>
    <scope>GENOME REANNOTATION</scope>
    <source>
        <strain>cv. Columbia</strain>
    </source>
</reference>
<reference key="6">
    <citation type="journal article" date="2003" name="Science">
        <title>Empirical analysis of transcriptional activity in the Arabidopsis genome.</title>
        <authorList>
            <person name="Yamada K."/>
            <person name="Lim J."/>
            <person name="Dale J.M."/>
            <person name="Chen H."/>
            <person name="Shinn P."/>
            <person name="Palm C.J."/>
            <person name="Southwick A.M."/>
            <person name="Wu H.C."/>
            <person name="Kim C.J."/>
            <person name="Nguyen M."/>
            <person name="Pham P.K."/>
            <person name="Cheuk R.F."/>
            <person name="Karlin-Newmann G."/>
            <person name="Liu S.X."/>
            <person name="Lam B."/>
            <person name="Sakano H."/>
            <person name="Wu T."/>
            <person name="Yu G."/>
            <person name="Miranda M."/>
            <person name="Quach H.L."/>
            <person name="Tripp M."/>
            <person name="Chang C.H."/>
            <person name="Lee J.M."/>
            <person name="Toriumi M.J."/>
            <person name="Chan M.M."/>
            <person name="Tang C.C."/>
            <person name="Onodera C.S."/>
            <person name="Deng J.M."/>
            <person name="Akiyama K."/>
            <person name="Ansari Y."/>
            <person name="Arakawa T."/>
            <person name="Banh J."/>
            <person name="Banno F."/>
            <person name="Bowser L."/>
            <person name="Brooks S.Y."/>
            <person name="Carninci P."/>
            <person name="Chao Q."/>
            <person name="Choy N."/>
            <person name="Enju A."/>
            <person name="Goldsmith A.D."/>
            <person name="Gurjal M."/>
            <person name="Hansen N.F."/>
            <person name="Hayashizaki Y."/>
            <person name="Johnson-Hopson C."/>
            <person name="Hsuan V.W."/>
            <person name="Iida K."/>
            <person name="Karnes M."/>
            <person name="Khan S."/>
            <person name="Koesema E."/>
            <person name="Ishida J."/>
            <person name="Jiang P.X."/>
            <person name="Jones T."/>
            <person name="Kawai J."/>
            <person name="Kamiya A."/>
            <person name="Meyers C."/>
            <person name="Nakajima M."/>
            <person name="Narusaka M."/>
            <person name="Seki M."/>
            <person name="Sakurai T."/>
            <person name="Satou M."/>
            <person name="Tamse R."/>
            <person name="Vaysberg M."/>
            <person name="Wallender E.K."/>
            <person name="Wong C."/>
            <person name="Yamamura Y."/>
            <person name="Yuan S."/>
            <person name="Shinozaki K."/>
            <person name="Davis R.W."/>
            <person name="Theologis A."/>
            <person name="Ecker J.R."/>
        </authorList>
    </citation>
    <scope>NUCLEOTIDE SEQUENCE [LARGE SCALE MRNA]</scope>
    <source>
        <strain>cv. Columbia</strain>
    </source>
</reference>
<reference key="7">
    <citation type="submission" date="2006-06" db="EMBL/GenBank/DDBJ databases">
        <title>Arabidopsis ORF clones.</title>
        <authorList>
            <person name="Kim C.J."/>
            <person name="Chen H."/>
            <person name="Quinitio C."/>
            <person name="Shinn P."/>
            <person name="Ecker J.R."/>
        </authorList>
    </citation>
    <scope>NUCLEOTIDE SEQUENCE [LARGE SCALE MRNA]</scope>
    <source>
        <strain>cv. Columbia</strain>
    </source>
</reference>
<reference key="8">
    <citation type="journal article" date="2006" name="Plant Physiol.">
        <title>Genome-wide analysis of the ERF gene family in Arabidopsis and rice.</title>
        <authorList>
            <person name="Nakano T."/>
            <person name="Suzuki K."/>
            <person name="Fujimura T."/>
            <person name="Shinshi H."/>
        </authorList>
    </citation>
    <scope>GENE FAMILY</scope>
    <scope>NOMENCLATURE</scope>
</reference>
<name>RA210_ARATH</name>
<protein>
    <recommendedName>
        <fullName>Ethylene-responsive transcription factor RAP2-10</fullName>
    </recommendedName>
    <alternativeName>
        <fullName>Protein RELATED TO APETALA2 10</fullName>
    </alternativeName>
</protein>
<evidence type="ECO:0000250" key="1"/>
<evidence type="ECO:0000255" key="2">
    <source>
        <dbReference type="PROSITE-ProRule" id="PRU00366"/>
    </source>
</evidence>
<evidence type="ECO:0000256" key="3">
    <source>
        <dbReference type="SAM" id="MobiDB-lite"/>
    </source>
</evidence>
<evidence type="ECO:0000305" key="4"/>
<feature type="chain" id="PRO_0000297939" description="Ethylene-responsive transcription factor RAP2-10">
    <location>
        <begin position="1"/>
        <end position="196"/>
    </location>
</feature>
<feature type="DNA-binding region" description="AP2/ERF" evidence="2">
    <location>
        <begin position="29"/>
        <end position="86"/>
    </location>
</feature>
<feature type="region of interest" description="Disordered" evidence="3">
    <location>
        <begin position="132"/>
        <end position="153"/>
    </location>
</feature>
<feature type="compositionally biased region" description="Basic residues" evidence="3">
    <location>
        <begin position="135"/>
        <end position="145"/>
    </location>
</feature>
<feature type="sequence conflict" description="In Ref. 2; AAL15314." evidence="4" ref="2">
    <original>G</original>
    <variation>S</variation>
    <location>
        <position position="78"/>
    </location>
</feature>
<accession>Q9SW63</accession>
<accession>O24643</accession>
<accession>Q93ZA6</accession>